<feature type="chain" id="PRO_1000184273" description="ATP synthase subunit a">
    <location>
        <begin position="1"/>
        <end position="250"/>
    </location>
</feature>
<feature type="transmembrane region" description="Helical" evidence="1">
    <location>
        <begin position="29"/>
        <end position="49"/>
    </location>
</feature>
<feature type="transmembrane region" description="Helical" evidence="1">
    <location>
        <begin position="84"/>
        <end position="104"/>
    </location>
</feature>
<feature type="transmembrane region" description="Helical" evidence="1">
    <location>
        <begin position="114"/>
        <end position="134"/>
    </location>
</feature>
<feature type="transmembrane region" description="Helical" evidence="1">
    <location>
        <begin position="143"/>
        <end position="163"/>
    </location>
</feature>
<feature type="transmembrane region" description="Helical" evidence="1">
    <location>
        <begin position="189"/>
        <end position="209"/>
    </location>
</feature>
<feature type="transmembrane region" description="Helical" evidence="1">
    <location>
        <begin position="216"/>
        <end position="236"/>
    </location>
</feature>
<evidence type="ECO:0000255" key="1">
    <source>
        <dbReference type="HAMAP-Rule" id="MF_01393"/>
    </source>
</evidence>
<gene>
    <name evidence="1" type="primary">atpB</name>
    <name type="ordered locus">Avi_0929</name>
</gene>
<sequence length="250" mass="26755">MSNDPTHQFQIHKIVPIEIGGIDFSFTNASLFMVATVACAAGFLYFATSNRGLIPGRAQSVAEMSYEFVASMLREGAGSHGMKFFPMVFSLFMFVLTANLLGMMPYFFTITSQIVVTFALAIFVIGTVLVYGFYKHGLGFLNLFVPSGVPGALLLLVVPIEVISFLSRPISLSIRLFANMLAGHITLKVFAGFVASLGSLGALGVGGALLPLAMTVALTGLEFLVAFLQAYVFAVLTCMYLNDAIHPGGH</sequence>
<comment type="function">
    <text evidence="1">Key component of the proton channel; it plays a direct role in the translocation of protons across the membrane.</text>
</comment>
<comment type="subunit">
    <text evidence="1">F-type ATPases have 2 components, CF(1) - the catalytic core - and CF(0) - the membrane proton channel. CF(1) has five subunits: alpha(3), beta(3), gamma(1), delta(1), epsilon(1). CF(0) has three main subunits: a(1), b(2) and c(9-12). The alpha and beta chains form an alternating ring which encloses part of the gamma chain. CF(1) is attached to CF(0) by a central stalk formed by the gamma and epsilon chains, while a peripheral stalk is formed by the delta and b chains.</text>
</comment>
<comment type="subcellular location">
    <subcellularLocation>
        <location evidence="1">Cell inner membrane</location>
        <topology evidence="1">Multi-pass membrane protein</topology>
    </subcellularLocation>
</comment>
<comment type="similarity">
    <text evidence="1">Belongs to the ATPase A chain family.</text>
</comment>
<protein>
    <recommendedName>
        <fullName evidence="1">ATP synthase subunit a</fullName>
    </recommendedName>
    <alternativeName>
        <fullName evidence="1">ATP synthase F0 sector subunit a</fullName>
    </alternativeName>
    <alternativeName>
        <fullName evidence="1">F-ATPase subunit 6</fullName>
    </alternativeName>
</protein>
<proteinExistence type="inferred from homology"/>
<name>ATP6_ALLAM</name>
<dbReference type="EMBL" id="CP000633">
    <property type="protein sequence ID" value="ACM35652.1"/>
    <property type="molecule type" value="Genomic_DNA"/>
</dbReference>
<dbReference type="RefSeq" id="WP_015915077.1">
    <property type="nucleotide sequence ID" value="NC_011989.1"/>
</dbReference>
<dbReference type="SMR" id="B9JSF9"/>
<dbReference type="STRING" id="311402.Avi_0929"/>
<dbReference type="KEGG" id="avi:Avi_0929"/>
<dbReference type="eggNOG" id="COG0356">
    <property type="taxonomic scope" value="Bacteria"/>
</dbReference>
<dbReference type="HOGENOM" id="CLU_041018_0_2_5"/>
<dbReference type="Proteomes" id="UP000001596">
    <property type="component" value="Chromosome 1"/>
</dbReference>
<dbReference type="GO" id="GO:0005886">
    <property type="term" value="C:plasma membrane"/>
    <property type="evidence" value="ECO:0007669"/>
    <property type="project" value="UniProtKB-SubCell"/>
</dbReference>
<dbReference type="GO" id="GO:0045259">
    <property type="term" value="C:proton-transporting ATP synthase complex"/>
    <property type="evidence" value="ECO:0007669"/>
    <property type="project" value="UniProtKB-KW"/>
</dbReference>
<dbReference type="GO" id="GO:0046933">
    <property type="term" value="F:proton-transporting ATP synthase activity, rotational mechanism"/>
    <property type="evidence" value="ECO:0007669"/>
    <property type="project" value="UniProtKB-UniRule"/>
</dbReference>
<dbReference type="CDD" id="cd00310">
    <property type="entry name" value="ATP-synt_Fo_a_6"/>
    <property type="match status" value="1"/>
</dbReference>
<dbReference type="FunFam" id="1.20.120.220:FF:000003">
    <property type="entry name" value="ATP synthase subunit a"/>
    <property type="match status" value="1"/>
</dbReference>
<dbReference type="Gene3D" id="1.20.120.220">
    <property type="entry name" value="ATP synthase, F0 complex, subunit A"/>
    <property type="match status" value="1"/>
</dbReference>
<dbReference type="HAMAP" id="MF_01393">
    <property type="entry name" value="ATP_synth_a_bact"/>
    <property type="match status" value="1"/>
</dbReference>
<dbReference type="InterPro" id="IPR000568">
    <property type="entry name" value="ATP_synth_F0_asu"/>
</dbReference>
<dbReference type="InterPro" id="IPR023011">
    <property type="entry name" value="ATP_synth_F0_asu_AS"/>
</dbReference>
<dbReference type="InterPro" id="IPR045083">
    <property type="entry name" value="ATP_synth_F0_asu_bact/mt"/>
</dbReference>
<dbReference type="InterPro" id="IPR035908">
    <property type="entry name" value="F0_ATP_A_sf"/>
</dbReference>
<dbReference type="NCBIfam" id="TIGR01131">
    <property type="entry name" value="ATP_synt_6_or_A"/>
    <property type="match status" value="1"/>
</dbReference>
<dbReference type="NCBIfam" id="NF004482">
    <property type="entry name" value="PRK05815.2-4"/>
    <property type="match status" value="1"/>
</dbReference>
<dbReference type="PANTHER" id="PTHR11410">
    <property type="entry name" value="ATP SYNTHASE SUBUNIT A"/>
    <property type="match status" value="1"/>
</dbReference>
<dbReference type="PANTHER" id="PTHR11410:SF0">
    <property type="entry name" value="ATP SYNTHASE SUBUNIT A"/>
    <property type="match status" value="1"/>
</dbReference>
<dbReference type="Pfam" id="PF00119">
    <property type="entry name" value="ATP-synt_A"/>
    <property type="match status" value="1"/>
</dbReference>
<dbReference type="PRINTS" id="PR00123">
    <property type="entry name" value="ATPASEA"/>
</dbReference>
<dbReference type="SUPFAM" id="SSF81336">
    <property type="entry name" value="F1F0 ATP synthase subunit A"/>
    <property type="match status" value="1"/>
</dbReference>
<dbReference type="PROSITE" id="PS00449">
    <property type="entry name" value="ATPASE_A"/>
    <property type="match status" value="1"/>
</dbReference>
<keyword id="KW-0066">ATP synthesis</keyword>
<keyword id="KW-0997">Cell inner membrane</keyword>
<keyword id="KW-1003">Cell membrane</keyword>
<keyword id="KW-0138">CF(0)</keyword>
<keyword id="KW-0375">Hydrogen ion transport</keyword>
<keyword id="KW-0406">Ion transport</keyword>
<keyword id="KW-0472">Membrane</keyword>
<keyword id="KW-1185">Reference proteome</keyword>
<keyword id="KW-0812">Transmembrane</keyword>
<keyword id="KW-1133">Transmembrane helix</keyword>
<keyword id="KW-0813">Transport</keyword>
<organism>
    <name type="scientific">Allorhizobium ampelinum (strain ATCC BAA-846 / DSM 112012 / S4)</name>
    <name type="common">Agrobacterium vitis (strain S4)</name>
    <dbReference type="NCBI Taxonomy" id="311402"/>
    <lineage>
        <taxon>Bacteria</taxon>
        <taxon>Pseudomonadati</taxon>
        <taxon>Pseudomonadota</taxon>
        <taxon>Alphaproteobacteria</taxon>
        <taxon>Hyphomicrobiales</taxon>
        <taxon>Rhizobiaceae</taxon>
        <taxon>Rhizobium/Agrobacterium group</taxon>
        <taxon>Allorhizobium</taxon>
        <taxon>Allorhizobium ampelinum</taxon>
    </lineage>
</organism>
<reference key="1">
    <citation type="journal article" date="2009" name="J. Bacteriol.">
        <title>Genome sequences of three Agrobacterium biovars help elucidate the evolution of multichromosome genomes in bacteria.</title>
        <authorList>
            <person name="Slater S.C."/>
            <person name="Goldman B.S."/>
            <person name="Goodner B."/>
            <person name="Setubal J.C."/>
            <person name="Farrand S.K."/>
            <person name="Nester E.W."/>
            <person name="Burr T.J."/>
            <person name="Banta L."/>
            <person name="Dickerman A.W."/>
            <person name="Paulsen I."/>
            <person name="Otten L."/>
            <person name="Suen G."/>
            <person name="Welch R."/>
            <person name="Almeida N.F."/>
            <person name="Arnold F."/>
            <person name="Burton O.T."/>
            <person name="Du Z."/>
            <person name="Ewing A."/>
            <person name="Godsy E."/>
            <person name="Heisel S."/>
            <person name="Houmiel K.L."/>
            <person name="Jhaveri J."/>
            <person name="Lu J."/>
            <person name="Miller N.M."/>
            <person name="Norton S."/>
            <person name="Chen Q."/>
            <person name="Phoolcharoen W."/>
            <person name="Ohlin V."/>
            <person name="Ondrusek D."/>
            <person name="Pride N."/>
            <person name="Stricklin S.L."/>
            <person name="Sun J."/>
            <person name="Wheeler C."/>
            <person name="Wilson L."/>
            <person name="Zhu H."/>
            <person name="Wood D.W."/>
        </authorList>
    </citation>
    <scope>NUCLEOTIDE SEQUENCE [LARGE SCALE GENOMIC DNA]</scope>
    <source>
        <strain>ATCC BAA-846 / DSM 112012 / S4</strain>
    </source>
</reference>
<accession>B9JSF9</accession>